<dbReference type="EC" id="2.7.11.1"/>
<dbReference type="EMBL" id="BX284601">
    <property type="protein sequence ID" value="CCD61569.1"/>
    <property type="molecule type" value="Genomic_DNA"/>
</dbReference>
<dbReference type="EMBL" id="BX284601">
    <property type="protein sequence ID" value="CCD61570.1"/>
    <property type="molecule type" value="Genomic_DNA"/>
</dbReference>
<dbReference type="RefSeq" id="NP_491549.2">
    <property type="nucleotide sequence ID" value="NM_059148.4"/>
</dbReference>
<dbReference type="RefSeq" id="NP_491552.2">
    <property type="nucleotide sequence ID" value="NM_059151.5"/>
</dbReference>
<dbReference type="SMR" id="Q95Q95"/>
<dbReference type="BioGRID" id="37625">
    <property type="interactions" value="23"/>
</dbReference>
<dbReference type="FunCoup" id="Q95Q95">
    <property type="interactions" value="2904"/>
</dbReference>
<dbReference type="STRING" id="6239.B0261.2a.1"/>
<dbReference type="iPTMnet" id="Q95Q95"/>
<dbReference type="PaxDb" id="6239-B0261.2a"/>
<dbReference type="PeptideAtlas" id="Q95Q95"/>
<dbReference type="EnsemblMetazoa" id="B0261.2a.1">
    <property type="protein sequence ID" value="B0261.2a.1"/>
    <property type="gene ID" value="WBGene00002583"/>
</dbReference>
<dbReference type="EnsemblMetazoa" id="B0261.2b.1">
    <property type="protein sequence ID" value="B0261.2b.1"/>
    <property type="gene ID" value="WBGene00002583"/>
</dbReference>
<dbReference type="GeneID" id="172167"/>
<dbReference type="KEGG" id="cel:CELE_B0261.2"/>
<dbReference type="UCSC" id="B0261.2b">
    <molecule id="Q95Q95-1"/>
    <property type="organism name" value="c. elegans"/>
</dbReference>
<dbReference type="AGR" id="WB:WBGene00002583"/>
<dbReference type="CTD" id="172167"/>
<dbReference type="WormBase" id="B0261.2a">
    <molecule id="Q95Q95-1"/>
    <property type="protein sequence ID" value="CE32559"/>
    <property type="gene ID" value="WBGene00002583"/>
    <property type="gene designation" value="let-363"/>
</dbReference>
<dbReference type="WormBase" id="B0261.2b">
    <molecule id="Q95Q95-2"/>
    <property type="protein sequence ID" value="CE32560"/>
    <property type="gene ID" value="WBGene00002583"/>
    <property type="gene designation" value="let-363"/>
</dbReference>
<dbReference type="eggNOG" id="KOG0891">
    <property type="taxonomic scope" value="Eukaryota"/>
</dbReference>
<dbReference type="GeneTree" id="ENSGT00940000174195"/>
<dbReference type="InParanoid" id="Q95Q95"/>
<dbReference type="OrthoDB" id="2250022at2759"/>
<dbReference type="PhylomeDB" id="Q95Q95"/>
<dbReference type="Reactome" id="R-CEL-1257604">
    <property type="pathway name" value="PIP3 activates AKT signaling"/>
</dbReference>
<dbReference type="Reactome" id="R-CEL-1632852">
    <property type="pathway name" value="Macroautophagy"/>
</dbReference>
<dbReference type="Reactome" id="R-CEL-165159">
    <property type="pathway name" value="MTOR signalling"/>
</dbReference>
<dbReference type="Reactome" id="R-CEL-166208">
    <property type="pathway name" value="mTORC1-mediated signalling"/>
</dbReference>
<dbReference type="Reactome" id="R-CEL-3371571">
    <property type="pathway name" value="HSF1-dependent transactivation"/>
</dbReference>
<dbReference type="Reactome" id="R-CEL-380972">
    <property type="pathway name" value="Energy dependent regulation of mTOR by LKB1-AMPK"/>
</dbReference>
<dbReference type="Reactome" id="R-CEL-389357">
    <property type="pathway name" value="CD28 dependent PI3K/Akt signaling"/>
</dbReference>
<dbReference type="Reactome" id="R-CEL-5218920">
    <property type="pathway name" value="VEGFR2 mediated vascular permeability"/>
</dbReference>
<dbReference type="Reactome" id="R-CEL-5628897">
    <property type="pathway name" value="TP53 Regulates Metabolic Genes"/>
</dbReference>
<dbReference type="Reactome" id="R-CEL-6804757">
    <property type="pathway name" value="Regulation of TP53 Degradation"/>
</dbReference>
<dbReference type="Reactome" id="R-CEL-8943724">
    <property type="pathway name" value="Regulation of PTEN gene transcription"/>
</dbReference>
<dbReference type="Reactome" id="R-CEL-9639288">
    <property type="pathway name" value="Amino acids regulate mTORC1"/>
</dbReference>
<dbReference type="Reactome" id="R-CEL-9856530">
    <property type="pathway name" value="High laminar flow shear stress activates signaling by PIEZO1 and PECAM1:CDH5:KDR in endothelial cells"/>
</dbReference>
<dbReference type="PRO" id="PR:Q95Q95"/>
<dbReference type="Proteomes" id="UP000001940">
    <property type="component" value="Chromosome I"/>
</dbReference>
<dbReference type="Bgee" id="WBGene00002583">
    <property type="expression patterns" value="Expressed in germ line (C elegans) and 4 other cell types or tissues"/>
</dbReference>
<dbReference type="GO" id="GO:0005737">
    <property type="term" value="C:cytoplasm"/>
    <property type="evidence" value="ECO:0000314"/>
    <property type="project" value="WormBase"/>
</dbReference>
<dbReference type="GO" id="GO:0005634">
    <property type="term" value="C:nucleus"/>
    <property type="evidence" value="ECO:0000318"/>
    <property type="project" value="GO_Central"/>
</dbReference>
<dbReference type="GO" id="GO:0031931">
    <property type="term" value="C:TORC1 complex"/>
    <property type="evidence" value="ECO:0000353"/>
    <property type="project" value="WormBase"/>
</dbReference>
<dbReference type="GO" id="GO:0031932">
    <property type="term" value="C:TORC2 complex"/>
    <property type="evidence" value="ECO:0000353"/>
    <property type="project" value="WormBase"/>
</dbReference>
<dbReference type="GO" id="GO:0005524">
    <property type="term" value="F:ATP binding"/>
    <property type="evidence" value="ECO:0007669"/>
    <property type="project" value="UniProtKB-KW"/>
</dbReference>
<dbReference type="GO" id="GO:0106310">
    <property type="term" value="F:protein serine kinase activity"/>
    <property type="evidence" value="ECO:0007669"/>
    <property type="project" value="RHEA"/>
</dbReference>
<dbReference type="GO" id="GO:0004674">
    <property type="term" value="F:protein serine/threonine kinase activity"/>
    <property type="evidence" value="ECO:0000314"/>
    <property type="project" value="WormBase"/>
</dbReference>
<dbReference type="GO" id="GO:0044877">
    <property type="term" value="F:protein-containing complex binding"/>
    <property type="evidence" value="ECO:0007669"/>
    <property type="project" value="InterPro"/>
</dbReference>
<dbReference type="GO" id="GO:0000492">
    <property type="term" value="P:box C/D snoRNP assembly"/>
    <property type="evidence" value="ECO:0000315"/>
    <property type="project" value="WormBase"/>
</dbReference>
<dbReference type="GO" id="GO:0008340">
    <property type="term" value="P:determination of adult lifespan"/>
    <property type="evidence" value="ECO:0000315"/>
    <property type="project" value="UniProtKB"/>
</dbReference>
<dbReference type="GO" id="GO:0048382">
    <property type="term" value="P:mesendoderm development"/>
    <property type="evidence" value="ECO:0000316"/>
    <property type="project" value="WormBase"/>
</dbReference>
<dbReference type="GO" id="GO:0010629">
    <property type="term" value="P:negative regulation of gene expression"/>
    <property type="evidence" value="ECO:0000315"/>
    <property type="project" value="UniProtKB"/>
</dbReference>
<dbReference type="GO" id="GO:0016242">
    <property type="term" value="P:negative regulation of macroautophagy"/>
    <property type="evidence" value="ECO:0000318"/>
    <property type="project" value="GO_Central"/>
</dbReference>
<dbReference type="GO" id="GO:0002119">
    <property type="term" value="P:nematode larval development"/>
    <property type="evidence" value="ECO:0000315"/>
    <property type="project" value="WormBase"/>
</dbReference>
<dbReference type="GO" id="GO:0010628">
    <property type="term" value="P:positive regulation of gene expression"/>
    <property type="evidence" value="ECO:0000315"/>
    <property type="project" value="UniProtKB"/>
</dbReference>
<dbReference type="GO" id="GO:0045727">
    <property type="term" value="P:positive regulation of translation"/>
    <property type="evidence" value="ECO:0000315"/>
    <property type="project" value="WormBase"/>
</dbReference>
<dbReference type="GO" id="GO:0006417">
    <property type="term" value="P:regulation of translation"/>
    <property type="evidence" value="ECO:0000315"/>
    <property type="project" value="WormBase"/>
</dbReference>
<dbReference type="GO" id="GO:1903935">
    <property type="term" value="P:response to sodium arsenite"/>
    <property type="evidence" value="ECO:0000316"/>
    <property type="project" value="UniProtKB"/>
</dbReference>
<dbReference type="GO" id="GO:0031929">
    <property type="term" value="P:TOR signaling"/>
    <property type="evidence" value="ECO:0000315"/>
    <property type="project" value="WormBase"/>
</dbReference>
<dbReference type="GO" id="GO:0038202">
    <property type="term" value="P:TORC1 signaling"/>
    <property type="evidence" value="ECO:0000318"/>
    <property type="project" value="GO_Central"/>
</dbReference>
<dbReference type="CDD" id="cd05169">
    <property type="entry name" value="PIKKc_TOR"/>
    <property type="match status" value="1"/>
</dbReference>
<dbReference type="FunFam" id="1.10.1070.11:FF:000040">
    <property type="entry name" value="Serine/threonine-protein kinase TOR"/>
    <property type="match status" value="1"/>
</dbReference>
<dbReference type="FunFam" id="1.20.120.150:FF:000001">
    <property type="entry name" value="Serine/threonine-protein kinase TOR"/>
    <property type="match status" value="1"/>
</dbReference>
<dbReference type="FunFam" id="1.25.10.10:FF:001107">
    <property type="entry name" value="Serine/threonine-protein kinase TOR"/>
    <property type="match status" value="1"/>
</dbReference>
<dbReference type="FunFam" id="3.30.1010.10:FF:000006">
    <property type="entry name" value="Serine/threonine-protein kinase TOR"/>
    <property type="match status" value="1"/>
</dbReference>
<dbReference type="Gene3D" id="1.20.120.150">
    <property type="entry name" value="FKBP12-rapamycin binding domain"/>
    <property type="match status" value="1"/>
</dbReference>
<dbReference type="Gene3D" id="1.25.10.10">
    <property type="entry name" value="Leucine-rich Repeat Variant"/>
    <property type="match status" value="3"/>
</dbReference>
<dbReference type="Gene3D" id="1.10.1070.11">
    <property type="entry name" value="Phosphatidylinositol 3-/4-kinase, catalytic domain"/>
    <property type="match status" value="1"/>
</dbReference>
<dbReference type="Gene3D" id="3.30.1010.10">
    <property type="entry name" value="Phosphatidylinositol 3-kinase Catalytic Subunit, Chain A, domain 4"/>
    <property type="match status" value="1"/>
</dbReference>
<dbReference type="InterPro" id="IPR011989">
    <property type="entry name" value="ARM-like"/>
</dbReference>
<dbReference type="InterPro" id="IPR016024">
    <property type="entry name" value="ARM-type_fold"/>
</dbReference>
<dbReference type="InterPro" id="IPR050517">
    <property type="entry name" value="DDR_Repair_Kinase"/>
</dbReference>
<dbReference type="InterPro" id="IPR003152">
    <property type="entry name" value="FATC_dom"/>
</dbReference>
<dbReference type="InterPro" id="IPR009076">
    <property type="entry name" value="FRB_dom"/>
</dbReference>
<dbReference type="InterPro" id="IPR036738">
    <property type="entry name" value="FRB_sf"/>
</dbReference>
<dbReference type="InterPro" id="IPR011009">
    <property type="entry name" value="Kinase-like_dom_sf"/>
</dbReference>
<dbReference type="InterPro" id="IPR024585">
    <property type="entry name" value="mTOR_dom"/>
</dbReference>
<dbReference type="InterPro" id="IPR000403">
    <property type="entry name" value="PI3/4_kinase_cat_dom"/>
</dbReference>
<dbReference type="InterPro" id="IPR036940">
    <property type="entry name" value="PI3/4_kinase_cat_sf"/>
</dbReference>
<dbReference type="InterPro" id="IPR018936">
    <property type="entry name" value="PI3/4_kinase_CS"/>
</dbReference>
<dbReference type="InterPro" id="IPR003151">
    <property type="entry name" value="PIK-rel_kinase_FAT"/>
</dbReference>
<dbReference type="InterPro" id="IPR014009">
    <property type="entry name" value="PIK_FAT"/>
</dbReference>
<dbReference type="InterPro" id="IPR026683">
    <property type="entry name" value="TOR_cat"/>
</dbReference>
<dbReference type="PANTHER" id="PTHR11139">
    <property type="entry name" value="ATAXIA TELANGIECTASIA MUTATED ATM -RELATED"/>
    <property type="match status" value="1"/>
</dbReference>
<dbReference type="PANTHER" id="PTHR11139:SF9">
    <property type="entry name" value="SERINE_THREONINE-PROTEIN KINASE MTOR"/>
    <property type="match status" value="1"/>
</dbReference>
<dbReference type="Pfam" id="PF02259">
    <property type="entry name" value="FAT"/>
    <property type="match status" value="1"/>
</dbReference>
<dbReference type="Pfam" id="PF02260">
    <property type="entry name" value="FATC"/>
    <property type="match status" value="1"/>
</dbReference>
<dbReference type="Pfam" id="PF08771">
    <property type="entry name" value="FRB_dom"/>
    <property type="match status" value="1"/>
</dbReference>
<dbReference type="Pfam" id="PF23593">
    <property type="entry name" value="HEAT_ATR"/>
    <property type="match status" value="1"/>
</dbReference>
<dbReference type="Pfam" id="PF11865">
    <property type="entry name" value="mTOR_dom"/>
    <property type="match status" value="1"/>
</dbReference>
<dbReference type="Pfam" id="PF00454">
    <property type="entry name" value="PI3_PI4_kinase"/>
    <property type="match status" value="1"/>
</dbReference>
<dbReference type="SMART" id="SM01346">
    <property type="entry name" value="DUF3385"/>
    <property type="match status" value="1"/>
</dbReference>
<dbReference type="SMART" id="SM01343">
    <property type="entry name" value="FATC"/>
    <property type="match status" value="1"/>
</dbReference>
<dbReference type="SMART" id="SM00146">
    <property type="entry name" value="PI3Kc"/>
    <property type="match status" value="1"/>
</dbReference>
<dbReference type="SMART" id="SM01345">
    <property type="entry name" value="Rapamycin_bind"/>
    <property type="match status" value="1"/>
</dbReference>
<dbReference type="SUPFAM" id="SSF48371">
    <property type="entry name" value="ARM repeat"/>
    <property type="match status" value="1"/>
</dbReference>
<dbReference type="SUPFAM" id="SSF47212">
    <property type="entry name" value="FKBP12-rapamycin-binding domain of FKBP-rapamycin-associated protein (FRAP)"/>
    <property type="match status" value="1"/>
</dbReference>
<dbReference type="SUPFAM" id="SSF56112">
    <property type="entry name" value="Protein kinase-like (PK-like)"/>
    <property type="match status" value="1"/>
</dbReference>
<dbReference type="PROSITE" id="PS51189">
    <property type="entry name" value="FAT"/>
    <property type="match status" value="1"/>
</dbReference>
<dbReference type="PROSITE" id="PS51190">
    <property type="entry name" value="FATC"/>
    <property type="match status" value="1"/>
</dbReference>
<dbReference type="PROSITE" id="PS00915">
    <property type="entry name" value="PI3_4_KINASE_1"/>
    <property type="match status" value="1"/>
</dbReference>
<dbReference type="PROSITE" id="PS00916">
    <property type="entry name" value="PI3_4_KINASE_2"/>
    <property type="match status" value="1"/>
</dbReference>
<dbReference type="PROSITE" id="PS50290">
    <property type="entry name" value="PI3_4_KINASE_3"/>
    <property type="match status" value="1"/>
</dbReference>
<name>TOR_CAEEL</name>
<protein>
    <recommendedName>
        <fullName>Target of rapamycin homolog</fullName>
        <ecNumber>2.7.11.1</ecNumber>
    </recommendedName>
    <alternativeName>
        <fullName>CeTOR</fullName>
    </alternativeName>
    <alternativeName>
        <fullName>Lethal protein 363</fullName>
    </alternativeName>
</protein>
<proteinExistence type="evidence at transcript level"/>
<feature type="chain" id="PRO_0000088811" description="Target of rapamycin homolog">
    <location>
        <begin position="1"/>
        <end position="2697"/>
    </location>
</feature>
<feature type="repeat" description="HEAT 1">
    <location>
        <begin position="235"/>
        <end position="272"/>
    </location>
</feature>
<feature type="repeat" description="HEAT 2">
    <location>
        <begin position="649"/>
        <end position="687"/>
    </location>
</feature>
<feature type="repeat" description="HEAT 3">
    <location>
        <begin position="689"/>
        <end position="726"/>
    </location>
</feature>
<feature type="repeat" description="HEAT 4">
    <location>
        <begin position="731"/>
        <end position="768"/>
    </location>
</feature>
<feature type="repeat" description="HEAT 5">
    <location>
        <begin position="815"/>
        <end position="853"/>
    </location>
</feature>
<feature type="repeat" description="HEAT 6">
    <location>
        <begin position="863"/>
        <end position="900"/>
    </location>
</feature>
<feature type="repeat" description="HEAT 7">
    <location>
        <begin position="1073"/>
        <end position="1110"/>
    </location>
</feature>
<feature type="domain" description="FAT" evidence="2">
    <location>
        <begin position="1438"/>
        <end position="2153"/>
    </location>
</feature>
<feature type="domain" description="PI3K/PI4K catalytic" evidence="1">
    <location>
        <begin position="2332"/>
        <end position="2647"/>
    </location>
</feature>
<feature type="domain" description="FATC" evidence="2 3">
    <location>
        <begin position="2665"/>
        <end position="2697"/>
    </location>
</feature>
<feature type="region of interest" description="Disordered" evidence="4">
    <location>
        <begin position="1"/>
        <end position="25"/>
    </location>
</feature>
<feature type="region of interest" description="Disordered" evidence="4">
    <location>
        <begin position="1945"/>
        <end position="1981"/>
    </location>
</feature>
<feature type="region of interest" description="Disordered" evidence="4">
    <location>
        <begin position="2017"/>
        <end position="2039"/>
    </location>
</feature>
<feature type="region of interest" description="G-loop" evidence="1">
    <location>
        <begin position="2338"/>
        <end position="2344"/>
    </location>
</feature>
<feature type="region of interest" description="Catalytic loop" evidence="1">
    <location>
        <begin position="2512"/>
        <end position="2520"/>
    </location>
</feature>
<feature type="region of interest" description="Activation loop" evidence="1">
    <location>
        <begin position="2532"/>
        <end position="2557"/>
    </location>
</feature>
<feature type="region of interest" description="Disordered" evidence="4">
    <location>
        <begin position="2615"/>
        <end position="2635"/>
    </location>
</feature>
<feature type="compositionally biased region" description="Pro residues" evidence="4">
    <location>
        <begin position="1969"/>
        <end position="1981"/>
    </location>
</feature>
<feature type="compositionally biased region" description="Polar residues" evidence="4">
    <location>
        <begin position="2030"/>
        <end position="2039"/>
    </location>
</feature>
<feature type="splice variant" id="VSP_009223" description="In isoform b." evidence="11">
    <location>
        <begin position="2212"/>
        <end position="2215"/>
    </location>
</feature>
<feature type="sequence conflict" description="In Ref. 2; CCD61569/CCD61570." evidence="11" ref="2">
    <original>K</original>
    <variation>ISE</variation>
    <location>
        <position position="1295"/>
    </location>
</feature>
<feature type="sequence conflict" description="In Ref. 2; CCD61570." evidence="11" ref="2">
    <location>
        <begin position="1992"/>
        <end position="1994"/>
    </location>
</feature>
<accession>Q95Q95</accession>
<accession>O01438</accession>
<comment type="function">
    <text evidence="5 6 8 9 10">Serine/threonine-protein kinase that regulates the mRNA translation machinery, probably by modulating the activity of translation factors such as eIF-4G and eIF-2 (PubMed:12225660). It may have some protein kinase activity instead of lipid kinase activity (PubMed:12225660). May play a role in P-granule degradation by autophagy in somatic cells during embryogenesis (PubMed:19377305). Required, during larval development, for the establishment of the proper number of germline progenitors, probably upstream of rsks-1 and ife-1 (PubMed:22278922). Required for larval development (PubMed:22278922). May act as a mediator of lifespan regulation by insulin signaling and nutrient sensing (PubMed:14668850, PubMed:28853436).</text>
</comment>
<comment type="catalytic activity">
    <reaction>
        <text>L-seryl-[protein] + ATP = O-phospho-L-seryl-[protein] + ADP + H(+)</text>
        <dbReference type="Rhea" id="RHEA:17989"/>
        <dbReference type="Rhea" id="RHEA-COMP:9863"/>
        <dbReference type="Rhea" id="RHEA-COMP:11604"/>
        <dbReference type="ChEBI" id="CHEBI:15378"/>
        <dbReference type="ChEBI" id="CHEBI:29999"/>
        <dbReference type="ChEBI" id="CHEBI:30616"/>
        <dbReference type="ChEBI" id="CHEBI:83421"/>
        <dbReference type="ChEBI" id="CHEBI:456216"/>
        <dbReference type="EC" id="2.7.11.1"/>
    </reaction>
</comment>
<comment type="catalytic activity">
    <reaction>
        <text>L-threonyl-[protein] + ATP = O-phospho-L-threonyl-[protein] + ADP + H(+)</text>
        <dbReference type="Rhea" id="RHEA:46608"/>
        <dbReference type="Rhea" id="RHEA-COMP:11060"/>
        <dbReference type="Rhea" id="RHEA-COMP:11605"/>
        <dbReference type="ChEBI" id="CHEBI:15378"/>
        <dbReference type="ChEBI" id="CHEBI:30013"/>
        <dbReference type="ChEBI" id="CHEBI:30616"/>
        <dbReference type="ChEBI" id="CHEBI:61977"/>
        <dbReference type="ChEBI" id="CHEBI:456216"/>
        <dbReference type="EC" id="2.7.11.1"/>
    </reaction>
</comment>
<comment type="subcellular location">
    <subcellularLocation>
        <location evidence="5">Nucleus</location>
    </subcellularLocation>
</comment>
<comment type="alternative products">
    <event type="alternative splicing"/>
    <isoform>
        <id>Q95Q95-1</id>
        <name evidence="12">a</name>
        <sequence type="displayed"/>
    </isoform>
    <isoform>
        <id>Q95Q95-2</id>
        <name evidence="13">b</name>
        <sequence type="described" ref="VSP_009223"/>
    </isoform>
</comment>
<comment type="tissue specificity">
    <text evidence="5 7">Ubiquitous. Expressed in all major tissues and organs, including the intestine, gonads and hypodermal cells (PubMed:12225660). Expressed in neurons (PubMed:17327275).</text>
</comment>
<comment type="disruption phenotype">
    <text evidence="6 7 8 9 10">Defects strongly increase lifespan, the mean lifetime being of 25 days instead of 10 days, suggesting that it may be involved in aging process (PubMed:14668850). RNAi-mediated knockdown results in increased longevity and a reduced nucleoli size (PubMed:28853436). RNAi-mediated knockdown in a ncl-1 mutant background (e1942) reduces the increased longevity and suppresses the reduced nucleoli size of the let-363 single mutant, and reduces the increased ribosomal protein synthesis in the ncl-1 single mutant (e1942) (PubMed:28853436). RNAi-mediated knockdown in the germline causes sterility, a severe reduction in the number of germline progenitors and a delay in G2 phase of the cell cycle (PubMed:22278922). RNAi-mediated knockdown results in no sepa-1 containing aggregates at the comma stage of embryonic development indicative of no germ cell specific P-granules at this stage (PubMed:19377305). RNAi-mediated knockdown enhances the loss of touch receptor neurons in a mec-4 u231 mutant (PubMed:17327275).</text>
</comment>
<comment type="similarity">
    <text evidence="11">Belongs to the PI3/PI4-kinase family.</text>
</comment>
<sequence length="2697" mass="306529">MLQQHGISFQMNADRQNKAATTSNRIVSAPATNEFDERHRKQGIDAARALASQYRSRITENRDANQRQAARELSRYVRSELKDEPNTFSDAFLNAIDGRTDIASQSAIYNCMKSNSNIDQKRAGIYLIVCLAETHSGNVIRYANYLLKMLNNGNGLDEDTVKMASKALAFLIATCKSYAAELVDRCLDHCHEWLGQNVPHSQQPKNQQEIDQIRRLAASHLSRELALATPTAFFLRVNLFFKYIFNAVRDKNPAVRIAGIDALHVVLTIVSQREAKNKTEWFKKCFDEALEGQPNPSQKDDLDRWHAVALILNELLRISDQRFELIRCESSQFIKQKFLKEDEEEGVEWLVLTKQQTIVESVTARKLVLERFPKILDCVRQIIPLANKTSSTKQQSSIYLNTVLMQLLPRICAFPQCDRTFQTISFDTSFTILQRNAVAAPAIGMMMLSNPDVHATHIEKTISFISAAIKKTTNSDVLDNYFTFLFLFVDAYHEQVTTQIKAIIPQLMDITLSRSLANVLKMIMMRIPKLRLNVQDGVMASVYQTLTGSLIPPKSEPIGRPASPKAILQKAETDPKELQRIVLAVDVLGEFYFSRGALQRIMQYVADYYLTADNVEIRLAAVSSCCEMVVPFVGVYKKVTSDKRNSLLQTIYGVLRAVCSVIVNDQDVRVRMQVISCFGQMPRPFLAHLAQPEMLEVQFMALHDEKLEMQQACVTLLGRLAELNPALVLPRLRLMLLETLSQMQQSGQARLEQHSAKMIAQLAKQSPKFMRPYVGSLMIAMIPKLRNDQKYAEVTAQVLNAVSEIAVIGGAEIVKNLKPLFEKLTHMINDSSSLHKREAALRAIGGICRSTAYVVDPYRDYPSLLDDLLRILKTVMSNTMRREAIKTLGILGAIDPYTHKVFTGSVQSSTAISTALSLPISETDSKDPRQDIIHWFNYEKCTLEEFYPAITIANLMLMMQDEDSQSYAEIAQAIVTIFRSLGDMAPLYTEQVIPRLIEVCRRATESSNRANLREFFLQQLANFVAIIRKHAAPYMPAIFTIIADAWKEDISVKMVVIEVLTDMGTAIGNDFSKYTGELIPYLLTVLQTDKTKERVLTVKVMESIQKLTHCIVQHLHLVLPPLLIILDDFSLKLSIRNTALSTVLHMTQQVDVSAYAPRMMQSWHHNISTAEMRDKLLLLLIEIIKQLGKFFDIFKRGVDQKLRDYNLDKSVHYEQYRKLAQRAQMSRDVLTSSVFAGSNGNIQYSSTQAGMRGQANNVYANNDLHERLMNGSIDSGASRQDNRDDYYRYGVEEKKEVPKVAPTTARPTSELVTVQITKQRLNKDALMPQWKNENLTSKDEWLQWLMKIRIGFLTYGSSPSLRAASSLGDQHPHLARDLFPAAFMSVWTELDSDVQNDLTSCLLRAISTGIPELIQTILNLAEFMDHSEKGPLPISHDVLGRWAEQTKAFAKACRYKEMSVLKKSGSMQTTFTRKVKLEPNDCQSLITYANKLNVQEEAAGVVRYAERNEMNFQMRGRWYEKLNEWEKALGAYELEEKKKSSCPNLQVYDEKDHLMTPEEAATAEEARMHEMRCLEALGRWDELNSKSVVWADQRGNRNDSVRDEINKKQLDHKMAVIAARGAWAVDNWERMADYVSVISENTQDGAMLRAVVAVHNDENTKAMGLIEKVREMIDSELTAMANESYERAYIPMVSVQQMAELEEAIEYKTRPERRPRIALLWSRRLQGCRRNVEQWQRLIMLRGLVLSPQEMHPLRVKFSSMCRKQGKNSMSRAVLRELLSLPANSDLVRAKAPFDKPLLVLALAKQLYQDDHKDEAIRALEDLANHWNKRINPIPKATGRELIPPSTKEPARICAKVLLKLGEWTELKSKTSNNMQVGELSFVRQQVSPQYRTKESRTPETIAFENTINYYQQATQYDPGWHKVWHKLASTHFYAVCRERPHPTTVISPPQQPQQPKKMHIPPVTRATSPPPPAQKSPQPAPFHSITEPLSVIIDYPVPPPLGSLVGLPPMPAYLSSNSSLPPQHHHVSPLSNDSPSNSAENKLYLKHAAHAVRCFAKALMCSPGSRLEDTLRLMQLWFDHGDDKDQDVYFALTETIFDLPVTTWLEAIPQLMARLDCPDDQKSVQLVLRVLCEIARHRPQAVIYALTVASRSKDVHRSKNAGTVLEKMMEYHSKLVREASLVTEELVRCAILWHEQWHDALDDASRVYFHRRLQDNNVQAMFDALRNMNDLMQKGAPTTMKEHSFQQTYSSDLKEAGRYVQAFESSGNVKDLNQAWEIYCSVFKKLRDQLATLNSLDLVYVSPNLVSAKDLELVVPGTYDPSAPIVSIQSFSSKMNVITSKQRPRKMVIRGSNGLDYQFLLKGHEDPRQDERVMQLFGLVNTLLANNSETCRRNLTIQRYSIVALSKDSGLIGWVPNCDTLHTLVKEYREKKAKIPLSIEHKTLQKLSLETEHLTLMQKLQLFESALSVTQGEDLRHVLWLKSPSSEVWFDRRTNYTRSVACMSMVGYILGLGDRHPSNLMLDRLTGKVVHIDFGDCFEVAMLREKFPERVPFRLTRMLINAMEVTGLDGVYNYTAERVLKMLRTNQESLLAVLEAFVYDPVINWRLVEGMKKDPKTRKDTGGRQNMAGAVLPSSSTTDSIMETIKRKLDGTEFVHTDGSTPPEPLQVTEQLAMLTEQATSPLNLCQSYIGWCPFW</sequence>
<evidence type="ECO:0000255" key="1">
    <source>
        <dbReference type="PROSITE-ProRule" id="PRU00269"/>
    </source>
</evidence>
<evidence type="ECO:0000255" key="2">
    <source>
        <dbReference type="PROSITE-ProRule" id="PRU00534"/>
    </source>
</evidence>
<evidence type="ECO:0000255" key="3">
    <source>
        <dbReference type="PROSITE-ProRule" id="PRU00535"/>
    </source>
</evidence>
<evidence type="ECO:0000256" key="4">
    <source>
        <dbReference type="SAM" id="MobiDB-lite"/>
    </source>
</evidence>
<evidence type="ECO:0000269" key="5">
    <source>
    </source>
</evidence>
<evidence type="ECO:0000269" key="6">
    <source>
    </source>
</evidence>
<evidence type="ECO:0000269" key="7">
    <source>
    </source>
</evidence>
<evidence type="ECO:0000269" key="8">
    <source>
    </source>
</evidence>
<evidence type="ECO:0000269" key="9">
    <source>
    </source>
</evidence>
<evidence type="ECO:0000269" key="10">
    <source>
    </source>
</evidence>
<evidence type="ECO:0000305" key="11"/>
<evidence type="ECO:0000312" key="12">
    <source>
        <dbReference type="WormBase" id="B0261.2a"/>
    </source>
</evidence>
<evidence type="ECO:0000312" key="13">
    <source>
        <dbReference type="WormBase" id="B0261.2b"/>
    </source>
</evidence>
<gene>
    <name evidence="12" type="primary">let-363</name>
    <name evidence="12" type="synonym">CeTor</name>
    <name evidence="12" type="ORF">B0261.2</name>
</gene>
<reference key="1">
    <citation type="journal article" date="2002" name="Curr. Biol.">
        <title>TOR deficiency in C. elegans causes developmental arrest and intestinal atrophy by inhibition of mRNA translation.</title>
        <authorList>
            <person name="Long X."/>
            <person name="Spycher C."/>
            <person name="Han Z.S."/>
            <person name="Rose A.M."/>
            <person name="Mueller F."/>
            <person name="Avruch J."/>
        </authorList>
    </citation>
    <scope>NUCLEOTIDE SEQUENCE [GENOMIC DNA] (ISOFORM A)</scope>
    <scope>FUNCTION</scope>
    <scope>SUBCELLULAR LOCATION</scope>
    <scope>TISSUE SPECIFICITY</scope>
    <source>
        <strain>Bristol N2</strain>
    </source>
</reference>
<reference key="2">
    <citation type="journal article" date="1998" name="Science">
        <title>Genome sequence of the nematode C. elegans: a platform for investigating biology.</title>
        <authorList>
            <consortium name="The C. elegans sequencing consortium"/>
        </authorList>
    </citation>
    <scope>NUCLEOTIDE SEQUENCE [LARGE SCALE GENOMIC DNA]</scope>
    <source>
        <strain>Bristol N2</strain>
    </source>
</reference>
<reference key="3">
    <citation type="journal article" date="2003" name="Nature">
        <title>Genetics: influence of TOR kinase on lifespan in C. elegans.</title>
        <authorList>
            <person name="Vellai T."/>
            <person name="Takacs-Vellai K."/>
            <person name="Zhang Y."/>
            <person name="Kovacs A.L."/>
            <person name="Orosz L."/>
            <person name="Mueller F."/>
        </authorList>
    </citation>
    <scope>FUNCTION</scope>
    <scope>DISRUPTION PHENOTYPE</scope>
</reference>
<reference key="4">
    <citation type="journal article" date="2007" name="J. Cell Sci.">
        <title>Influence of autophagy genes on ion-channel-dependent neuronal degeneration in Caenorhabditis elegans.</title>
        <authorList>
            <person name="Toth M.L."/>
            <person name="Simon P."/>
            <person name="Kovacs A.L."/>
            <person name="Vellai T."/>
        </authorList>
    </citation>
    <scope>TISSUE SPECIFICITY</scope>
    <scope>DISRUPTION PHENOTYPE</scope>
</reference>
<reference key="5">
    <citation type="journal article" date="2009" name="Autophagy">
        <title>epg-1 functions in autophagy-regulated processes and may encode a highly divergent Atg13 homolog in C. elegans.</title>
        <authorList>
            <person name="Tian E."/>
            <person name="Wang F."/>
            <person name="Han J."/>
            <person name="Zhang H."/>
        </authorList>
    </citation>
    <scope>FUNCTION</scope>
    <scope>DISRUPTION PHENOTYPE</scope>
</reference>
<reference key="6">
    <citation type="journal article" date="2012" name="Development">
        <title>S6K links cell fate, cell cycle and nutrient response in C. elegans germline stem/progenitor cells.</title>
        <authorList>
            <person name="Korta D.Z."/>
            <person name="Tuck S."/>
            <person name="Hubbard E.J."/>
        </authorList>
    </citation>
    <scope>FUNCTION</scope>
    <scope>DISRUPTION PHENOTYPE</scope>
</reference>
<reference key="7">
    <citation type="journal article" date="2016" name="Nat. Commun.">
        <title>Small nucleoli are a cellular hallmark of longevity.</title>
        <authorList>
            <person name="Tiku V."/>
            <person name="Jain C."/>
            <person name="Raz Y."/>
            <person name="Nakamura S."/>
            <person name="Heestand B."/>
            <person name="Liu W."/>
            <person name="Spaeth M."/>
            <person name="Suchiman H.E.D."/>
            <person name="Mueller R.U."/>
            <person name="Slagboom P.E."/>
            <person name="Partridge L."/>
            <person name="Antebi A."/>
        </authorList>
    </citation>
    <scope>FUNCTION</scope>
    <scope>DISRUPTION PHENOTYPE</scope>
</reference>
<organism>
    <name type="scientific">Caenorhabditis elegans</name>
    <dbReference type="NCBI Taxonomy" id="6239"/>
    <lineage>
        <taxon>Eukaryota</taxon>
        <taxon>Metazoa</taxon>
        <taxon>Ecdysozoa</taxon>
        <taxon>Nematoda</taxon>
        <taxon>Chromadorea</taxon>
        <taxon>Rhabditida</taxon>
        <taxon>Rhabditina</taxon>
        <taxon>Rhabditomorpha</taxon>
        <taxon>Rhabditoidea</taxon>
        <taxon>Rhabditidae</taxon>
        <taxon>Peloderinae</taxon>
        <taxon>Caenorhabditis</taxon>
    </lineage>
</organism>
<keyword id="KW-0025">Alternative splicing</keyword>
<keyword id="KW-0067">ATP-binding</keyword>
<keyword id="KW-0418">Kinase</keyword>
<keyword id="KW-0547">Nucleotide-binding</keyword>
<keyword id="KW-0539">Nucleus</keyword>
<keyword id="KW-1185">Reference proteome</keyword>
<keyword id="KW-0677">Repeat</keyword>
<keyword id="KW-0723">Serine/threonine-protein kinase</keyword>
<keyword id="KW-0808">Transferase</keyword>
<keyword id="KW-0810">Translation regulation</keyword>